<sequence length="341" mass="36420">MIRADLATIPTYVPGRRLNNATKLSSNEVSFSPLPAAVDAVTEATQGANRYPDMGAVELREALAEHLEVEFDQVTVGCGSSALCQQLVQATCAQGDEVIFPWRSFEAYPIFAQVAGATPVAIPLTADQNHDLDAMAAAITDKTRLIFICNPNNPSGTTITQAQFDNFMEKVPNDVVVGLDEAYFEFNRADDTPVATEEIHRHDNVIGLRTFSKAYGLAGLRVGYAFGNAEIIAAMNKVAIPFAVNSAAQAAALASLNSADELMERVEETVEKRDAVVAALGTAPTQANFVWLPGEGAAELAAKLAEHGIVIRAFPEGARISVTNAEETDKLLRAWEAINAG</sequence>
<proteinExistence type="inferred from homology"/>
<reference key="1">
    <citation type="journal article" date="2007" name="Microbiology">
        <title>Comparative analysis of the Corynebacterium glutamicum group and complete genome sequence of strain R.</title>
        <authorList>
            <person name="Yukawa H."/>
            <person name="Omumasaba C.A."/>
            <person name="Nonaka H."/>
            <person name="Kos P."/>
            <person name="Okai N."/>
            <person name="Suzuki N."/>
            <person name="Suda M."/>
            <person name="Tsuge Y."/>
            <person name="Watanabe J."/>
            <person name="Ikeda Y."/>
            <person name="Vertes A.A."/>
            <person name="Inui M."/>
        </authorList>
    </citation>
    <scope>NUCLEOTIDE SEQUENCE [LARGE SCALE GENOMIC DNA]</scope>
    <source>
        <strain>R</strain>
    </source>
</reference>
<gene>
    <name evidence="1" type="primary">pat</name>
    <name type="ordered locus">cgR_0297</name>
</gene>
<comment type="function">
    <text evidence="1">Aminotransferase that catalyzes the conversion of aromatic amino acids and 2-oxoglutarate into corresponding aromatic oxo acids and L-glutamate.</text>
</comment>
<comment type="catalytic activity">
    <reaction evidence="1">
        <text>an aromatic L-alpha-amino acid + 2-oxoglutarate = an aromatic oxo-acid + L-glutamate</text>
        <dbReference type="Rhea" id="RHEA:17533"/>
        <dbReference type="ChEBI" id="CHEBI:16810"/>
        <dbReference type="ChEBI" id="CHEBI:29985"/>
        <dbReference type="ChEBI" id="CHEBI:73309"/>
        <dbReference type="ChEBI" id="CHEBI:84824"/>
        <dbReference type="EC" id="2.6.1.57"/>
    </reaction>
</comment>
<comment type="cofactor">
    <cofactor evidence="1">
        <name>pyridoxal 5'-phosphate</name>
        <dbReference type="ChEBI" id="CHEBI:597326"/>
    </cofactor>
</comment>
<comment type="subunit">
    <text evidence="1">Homodimer.</text>
</comment>
<comment type="similarity">
    <text evidence="1">Belongs to the class-II pyridoxal-phosphate-dependent aminotransferase family.</text>
</comment>
<organism>
    <name type="scientific">Corynebacterium glutamicum (strain R)</name>
    <dbReference type="NCBI Taxonomy" id="340322"/>
    <lineage>
        <taxon>Bacteria</taxon>
        <taxon>Bacillati</taxon>
        <taxon>Actinomycetota</taxon>
        <taxon>Actinomycetes</taxon>
        <taxon>Mycobacteriales</taxon>
        <taxon>Corynebacteriaceae</taxon>
        <taxon>Corynebacterium</taxon>
    </lineage>
</organism>
<evidence type="ECO:0000255" key="1">
    <source>
        <dbReference type="HAMAP-Rule" id="MF_01513"/>
    </source>
</evidence>
<feature type="chain" id="PRO_1000024493" description="Aromatic amino acid aminotransferase">
    <location>
        <begin position="1"/>
        <end position="341"/>
    </location>
</feature>
<feature type="modified residue" description="N6-(pyridoxal phosphate)lysine" evidence="1">
    <location>
        <position position="213"/>
    </location>
</feature>
<protein>
    <recommendedName>
        <fullName evidence="1">Aromatic amino acid aminotransferase</fullName>
        <shortName evidence="1">ArAT</shortName>
        <ecNumber evidence="1">2.6.1.57</ecNumber>
    </recommendedName>
</protein>
<dbReference type="EC" id="2.6.1.57" evidence="1"/>
<dbReference type="EMBL" id="AP009044">
    <property type="protein sequence ID" value="BAF53261.1"/>
    <property type="molecule type" value="Genomic_DNA"/>
</dbReference>
<dbReference type="RefSeq" id="WP_011896550.1">
    <property type="nucleotide sequence ID" value="NC_009342.1"/>
</dbReference>
<dbReference type="SMR" id="A4QAL4"/>
<dbReference type="KEGG" id="cgt:cgR_0297"/>
<dbReference type="HOGENOM" id="CLU_017584_3_3_11"/>
<dbReference type="PhylomeDB" id="A4QAL4"/>
<dbReference type="Proteomes" id="UP000006698">
    <property type="component" value="Chromosome"/>
</dbReference>
<dbReference type="GO" id="GO:0008793">
    <property type="term" value="F:aromatic-amino-acid transaminase activity"/>
    <property type="evidence" value="ECO:0007669"/>
    <property type="project" value="UniProtKB-UniRule"/>
</dbReference>
<dbReference type="GO" id="GO:0004400">
    <property type="term" value="F:histidinol-phosphate transaminase activity"/>
    <property type="evidence" value="ECO:0007669"/>
    <property type="project" value="InterPro"/>
</dbReference>
<dbReference type="GO" id="GO:0030170">
    <property type="term" value="F:pyridoxal phosphate binding"/>
    <property type="evidence" value="ECO:0007669"/>
    <property type="project" value="UniProtKB-UniRule"/>
</dbReference>
<dbReference type="GO" id="GO:0000105">
    <property type="term" value="P:L-histidine biosynthetic process"/>
    <property type="evidence" value="ECO:0007669"/>
    <property type="project" value="InterPro"/>
</dbReference>
<dbReference type="CDD" id="cd00609">
    <property type="entry name" value="AAT_like"/>
    <property type="match status" value="1"/>
</dbReference>
<dbReference type="Gene3D" id="3.90.1150.10">
    <property type="entry name" value="Aspartate Aminotransferase, domain 1"/>
    <property type="match status" value="1"/>
</dbReference>
<dbReference type="Gene3D" id="3.40.640.10">
    <property type="entry name" value="Type I PLP-dependent aspartate aminotransferase-like (Major domain)"/>
    <property type="match status" value="1"/>
</dbReference>
<dbReference type="HAMAP" id="MF_01023">
    <property type="entry name" value="HisC_aminotrans_2"/>
    <property type="match status" value="1"/>
</dbReference>
<dbReference type="HAMAP" id="MF_01513">
    <property type="entry name" value="Phe_aminotrans_2"/>
    <property type="match status" value="1"/>
</dbReference>
<dbReference type="InterPro" id="IPR001917">
    <property type="entry name" value="Aminotrans_II_pyridoxalP_BS"/>
</dbReference>
<dbReference type="InterPro" id="IPR004839">
    <property type="entry name" value="Aminotransferase_I/II_large"/>
</dbReference>
<dbReference type="InterPro" id="IPR024892">
    <property type="entry name" value="ArAT"/>
</dbReference>
<dbReference type="InterPro" id="IPR005861">
    <property type="entry name" value="HisP_aminotrans"/>
</dbReference>
<dbReference type="InterPro" id="IPR050106">
    <property type="entry name" value="HistidinolP_aminotransfase"/>
</dbReference>
<dbReference type="InterPro" id="IPR015424">
    <property type="entry name" value="PyrdxlP-dep_Trfase"/>
</dbReference>
<dbReference type="InterPro" id="IPR015421">
    <property type="entry name" value="PyrdxlP-dep_Trfase_major"/>
</dbReference>
<dbReference type="InterPro" id="IPR015422">
    <property type="entry name" value="PyrdxlP-dep_Trfase_small"/>
</dbReference>
<dbReference type="NCBIfam" id="TIGR01141">
    <property type="entry name" value="hisC"/>
    <property type="match status" value="1"/>
</dbReference>
<dbReference type="NCBIfam" id="NF002878">
    <property type="entry name" value="PRK03321.1"/>
    <property type="match status" value="1"/>
</dbReference>
<dbReference type="PANTHER" id="PTHR43643:SF3">
    <property type="entry name" value="HISTIDINOL-PHOSPHATE AMINOTRANSFERASE"/>
    <property type="match status" value="1"/>
</dbReference>
<dbReference type="PANTHER" id="PTHR43643">
    <property type="entry name" value="HISTIDINOL-PHOSPHATE AMINOTRANSFERASE 2"/>
    <property type="match status" value="1"/>
</dbReference>
<dbReference type="Pfam" id="PF00155">
    <property type="entry name" value="Aminotran_1_2"/>
    <property type="match status" value="1"/>
</dbReference>
<dbReference type="SUPFAM" id="SSF53383">
    <property type="entry name" value="PLP-dependent transferases"/>
    <property type="match status" value="1"/>
</dbReference>
<dbReference type="PROSITE" id="PS00599">
    <property type="entry name" value="AA_TRANSFER_CLASS_2"/>
    <property type="match status" value="1"/>
</dbReference>
<name>PATR_CORGB</name>
<accession>A4QAL4</accession>
<keyword id="KW-0032">Aminotransferase</keyword>
<keyword id="KW-0663">Pyridoxal phosphate</keyword>
<keyword id="KW-0808">Transferase</keyword>